<accession>D9R4W7</accession>
<gene>
    <name evidence="1" type="primary">hflX</name>
    <name type="ordered locus">Closa_2505</name>
</gene>
<evidence type="ECO:0000255" key="1">
    <source>
        <dbReference type="HAMAP-Rule" id="MF_00900"/>
    </source>
</evidence>
<feature type="chain" id="PRO_0000412656" description="GTPase HflX">
    <location>
        <begin position="1"/>
        <end position="423"/>
    </location>
</feature>
<feature type="domain" description="Hflx-type G" evidence="1">
    <location>
        <begin position="202"/>
        <end position="366"/>
    </location>
</feature>
<feature type="binding site" evidence="1">
    <location>
        <begin position="208"/>
        <end position="215"/>
    </location>
    <ligand>
        <name>GTP</name>
        <dbReference type="ChEBI" id="CHEBI:37565"/>
    </ligand>
</feature>
<feature type="binding site" evidence="1">
    <location>
        <position position="215"/>
    </location>
    <ligand>
        <name>Mg(2+)</name>
        <dbReference type="ChEBI" id="CHEBI:18420"/>
    </ligand>
</feature>
<feature type="binding site" evidence="1">
    <location>
        <begin position="233"/>
        <end position="237"/>
    </location>
    <ligand>
        <name>GTP</name>
        <dbReference type="ChEBI" id="CHEBI:37565"/>
    </ligand>
</feature>
<feature type="binding site" evidence="1">
    <location>
        <position position="235"/>
    </location>
    <ligand>
        <name>Mg(2+)</name>
        <dbReference type="ChEBI" id="CHEBI:18420"/>
    </ligand>
</feature>
<feature type="binding site" evidence="1">
    <location>
        <begin position="255"/>
        <end position="258"/>
    </location>
    <ligand>
        <name>GTP</name>
        <dbReference type="ChEBI" id="CHEBI:37565"/>
    </ligand>
</feature>
<feature type="binding site" evidence="1">
    <location>
        <begin position="321"/>
        <end position="324"/>
    </location>
    <ligand>
        <name>GTP</name>
        <dbReference type="ChEBI" id="CHEBI:37565"/>
    </ligand>
</feature>
<feature type="binding site" evidence="1">
    <location>
        <begin position="344"/>
        <end position="346"/>
    </location>
    <ligand>
        <name>GTP</name>
        <dbReference type="ChEBI" id="CHEBI:37565"/>
    </ligand>
</feature>
<proteinExistence type="inferred from homology"/>
<name>HFLX_LACSW</name>
<sequence>MTELIELKEIEERVILVAVSTGDEEDAKGSLDELEELVKTAGAVAVDKVIQNRERIHPGTYLGKGKIEEIKDRIWELDATGIVCDDELSPAQLRNLEGALDTKVMDRTMVILDIFASRAVTREGKIQVELAQLRYRSARLVGLRSSLSRLGGGIGTRGPGEKKLEMDRRLIHDRIGMLKAELEDVKRHREVVRQQRDKNHVPAAAIVGYTNAGKSTLLNRLTDAGILAEDKLFATLDPTTRNLSLPGGQQILLTDTVGFIRKLPHHLIEAFKSTLEEAKYSDIILHVVDCSNPQMDMQMYVVYETLRELGICDKIMITVFNKIDAADAGVILRDVSSDHQVRISAKTGEGLDELINLLETILRNQKVYLERIYSYKEAGKIQLIRKYGQLLKEEYQEDGIFVNAYVPSELFASLADNADAFNE</sequence>
<organism>
    <name type="scientific">Lacrimispora saccharolytica (strain ATCC 35040 / DSM 2544 / NRCC 2533 / WM1)</name>
    <name type="common">Clostridium saccharolyticum</name>
    <dbReference type="NCBI Taxonomy" id="610130"/>
    <lineage>
        <taxon>Bacteria</taxon>
        <taxon>Bacillati</taxon>
        <taxon>Bacillota</taxon>
        <taxon>Clostridia</taxon>
        <taxon>Lachnospirales</taxon>
        <taxon>Lachnospiraceae</taxon>
        <taxon>Lacrimispora</taxon>
    </lineage>
</organism>
<protein>
    <recommendedName>
        <fullName evidence="1">GTPase HflX</fullName>
    </recommendedName>
    <alternativeName>
        <fullName evidence="1">GTP-binding protein HflX</fullName>
    </alternativeName>
</protein>
<keyword id="KW-0963">Cytoplasm</keyword>
<keyword id="KW-0342">GTP-binding</keyword>
<keyword id="KW-0460">Magnesium</keyword>
<keyword id="KW-0479">Metal-binding</keyword>
<keyword id="KW-0547">Nucleotide-binding</keyword>
<dbReference type="EMBL" id="CP002109">
    <property type="protein sequence ID" value="ADL05074.1"/>
    <property type="molecule type" value="Genomic_DNA"/>
</dbReference>
<dbReference type="RefSeq" id="WP_013273160.1">
    <property type="nucleotide sequence ID" value="NC_014376.1"/>
</dbReference>
<dbReference type="SMR" id="D9R4W7"/>
<dbReference type="STRING" id="610130.Closa_2505"/>
<dbReference type="PaxDb" id="610130-Closa_2505"/>
<dbReference type="KEGG" id="csh:Closa_2505"/>
<dbReference type="eggNOG" id="COG2262">
    <property type="taxonomic scope" value="Bacteria"/>
</dbReference>
<dbReference type="HOGENOM" id="CLU_019597_1_0_9"/>
<dbReference type="OrthoDB" id="9812272at2"/>
<dbReference type="Proteomes" id="UP000001662">
    <property type="component" value="Chromosome"/>
</dbReference>
<dbReference type="GO" id="GO:0005737">
    <property type="term" value="C:cytoplasm"/>
    <property type="evidence" value="ECO:0007669"/>
    <property type="project" value="UniProtKB-SubCell"/>
</dbReference>
<dbReference type="GO" id="GO:0005525">
    <property type="term" value="F:GTP binding"/>
    <property type="evidence" value="ECO:0007669"/>
    <property type="project" value="UniProtKB-UniRule"/>
</dbReference>
<dbReference type="GO" id="GO:0003924">
    <property type="term" value="F:GTPase activity"/>
    <property type="evidence" value="ECO:0007669"/>
    <property type="project" value="UniProtKB-UniRule"/>
</dbReference>
<dbReference type="GO" id="GO:0046872">
    <property type="term" value="F:metal ion binding"/>
    <property type="evidence" value="ECO:0007669"/>
    <property type="project" value="UniProtKB-KW"/>
</dbReference>
<dbReference type="GO" id="GO:0043022">
    <property type="term" value="F:ribosome binding"/>
    <property type="evidence" value="ECO:0007669"/>
    <property type="project" value="TreeGrafter"/>
</dbReference>
<dbReference type="CDD" id="cd01878">
    <property type="entry name" value="HflX"/>
    <property type="match status" value="1"/>
</dbReference>
<dbReference type="FunFam" id="3.40.50.11060:FF:000001">
    <property type="entry name" value="GTPase HflX"/>
    <property type="match status" value="1"/>
</dbReference>
<dbReference type="Gene3D" id="6.10.250.2860">
    <property type="match status" value="1"/>
</dbReference>
<dbReference type="Gene3D" id="3.40.50.11060">
    <property type="entry name" value="GTPase HflX, N-terminal domain"/>
    <property type="match status" value="1"/>
</dbReference>
<dbReference type="Gene3D" id="3.40.50.300">
    <property type="entry name" value="P-loop containing nucleotide triphosphate hydrolases"/>
    <property type="match status" value="1"/>
</dbReference>
<dbReference type="HAMAP" id="MF_00900">
    <property type="entry name" value="GTPase_HflX"/>
    <property type="match status" value="1"/>
</dbReference>
<dbReference type="InterPro" id="IPR030394">
    <property type="entry name" value="G_HFLX_dom"/>
</dbReference>
<dbReference type="InterPro" id="IPR006073">
    <property type="entry name" value="GTP-bd"/>
</dbReference>
<dbReference type="InterPro" id="IPR032305">
    <property type="entry name" value="GTP-bd_M"/>
</dbReference>
<dbReference type="InterPro" id="IPR016496">
    <property type="entry name" value="GTPase_HflX"/>
</dbReference>
<dbReference type="InterPro" id="IPR025121">
    <property type="entry name" value="GTPase_HflX_N"/>
</dbReference>
<dbReference type="InterPro" id="IPR042108">
    <property type="entry name" value="GTPase_HflX_N_sf"/>
</dbReference>
<dbReference type="InterPro" id="IPR027417">
    <property type="entry name" value="P-loop_NTPase"/>
</dbReference>
<dbReference type="NCBIfam" id="TIGR03156">
    <property type="entry name" value="GTP_HflX"/>
    <property type="match status" value="1"/>
</dbReference>
<dbReference type="PANTHER" id="PTHR10229:SF0">
    <property type="entry name" value="GTP-BINDING PROTEIN 6-RELATED"/>
    <property type="match status" value="1"/>
</dbReference>
<dbReference type="PANTHER" id="PTHR10229">
    <property type="entry name" value="GTP-BINDING PROTEIN HFLX"/>
    <property type="match status" value="1"/>
</dbReference>
<dbReference type="Pfam" id="PF16360">
    <property type="entry name" value="GTP-bdg_M"/>
    <property type="match status" value="1"/>
</dbReference>
<dbReference type="Pfam" id="PF13167">
    <property type="entry name" value="GTP-bdg_N"/>
    <property type="match status" value="1"/>
</dbReference>
<dbReference type="Pfam" id="PF01926">
    <property type="entry name" value="MMR_HSR1"/>
    <property type="match status" value="1"/>
</dbReference>
<dbReference type="PIRSF" id="PIRSF006809">
    <property type="entry name" value="GTP-binding_hflX_prd"/>
    <property type="match status" value="1"/>
</dbReference>
<dbReference type="PRINTS" id="PR00326">
    <property type="entry name" value="GTP1OBG"/>
</dbReference>
<dbReference type="SUPFAM" id="SSF52540">
    <property type="entry name" value="P-loop containing nucleoside triphosphate hydrolases"/>
    <property type="match status" value="1"/>
</dbReference>
<dbReference type="PROSITE" id="PS51705">
    <property type="entry name" value="G_HFLX"/>
    <property type="match status" value="1"/>
</dbReference>
<comment type="function">
    <text evidence="1">GTPase that associates with the 50S ribosomal subunit and may have a role during protein synthesis or ribosome biogenesis.</text>
</comment>
<comment type="cofactor">
    <cofactor evidence="1">
        <name>Mg(2+)</name>
        <dbReference type="ChEBI" id="CHEBI:18420"/>
    </cofactor>
</comment>
<comment type="subunit">
    <text evidence="1">Monomer. Associates with the 50S ribosomal subunit.</text>
</comment>
<comment type="subcellular location">
    <subcellularLocation>
        <location evidence="1">Cytoplasm</location>
    </subcellularLocation>
    <text evidence="1">May associate with membranes.</text>
</comment>
<comment type="similarity">
    <text evidence="1">Belongs to the TRAFAC class OBG-HflX-like GTPase superfamily. HflX GTPase family.</text>
</comment>
<reference key="1">
    <citation type="submission" date="2010-07" db="EMBL/GenBank/DDBJ databases">
        <title>Complete sequence of Clostridium saccharolyticum WM1.</title>
        <authorList>
            <consortium name="US DOE Joint Genome Institute"/>
            <person name="Lucas S."/>
            <person name="Copeland A."/>
            <person name="Lapidus A."/>
            <person name="Cheng J.-F."/>
            <person name="Bruce D."/>
            <person name="Goodwin L."/>
            <person name="Pitluck S."/>
            <person name="Chertkov O."/>
            <person name="Detter J.C."/>
            <person name="Han C."/>
            <person name="Tapia R."/>
            <person name="Land M."/>
            <person name="Hauser L."/>
            <person name="Chang Y.-J."/>
            <person name="Jeffries C."/>
            <person name="Kyrpides N."/>
            <person name="Ivanova N."/>
            <person name="Mikhailova N."/>
            <person name="Mouttaki H."/>
            <person name="Lin L."/>
            <person name="Zhou J."/>
            <person name="Hemme C.L."/>
            <person name="Woyke T."/>
        </authorList>
    </citation>
    <scope>NUCLEOTIDE SEQUENCE [LARGE SCALE GENOMIC DNA]</scope>
    <source>
        <strain>ATCC 35040 / DSM 2544 / NRCC 2533 / WM1</strain>
    </source>
</reference>